<proteinExistence type="evidence at transcript level"/>
<comment type="function">
    <text evidence="3">Cytochrome P450 involved in brassinosteroids (BRs) inactivation and regulation of BRs homeostasis. Is a multifunctional and multisubstrate enzyme that controls the endogenous bioactive BR content both by direct inactivation of castasterone (CS) and by decreasing the levels of BR precursors. Catalyzes the oxidation of carbon 22 hydroxylated BR intermediates to produce C26 oxidized metabolites.</text>
</comment>
<comment type="cofactor">
    <cofactor evidence="1">
        <name>heme</name>
        <dbReference type="ChEBI" id="CHEBI:30413"/>
    </cofactor>
</comment>
<comment type="subcellular location">
    <subcellularLocation>
        <location evidence="2">Membrane</location>
        <topology evidence="2">Single-pass membrane protein</topology>
    </subcellularLocation>
</comment>
<comment type="tissue specificity">
    <text evidence="3">Expressed in roots, shoot apex, leaf sheaths and leaf blades.</text>
</comment>
<comment type="induction">
    <text evidence="3">By brassinolide (BL) and dark treatment.</text>
</comment>
<comment type="miscellaneous">
    <text>Plants overexpressing CYP734A2 show a dwarf phenotype, characterized by abnormal leaves with stiff, tortuous blades, undeveloped leaf sheaths, no flowering and bear seeds. Over-expression of CYP734A2 causes an important reduction of the levels of the BRs castasterone (CS), 6-deoxocastasterone (6-deoxoCS) and 6-deoxotyphasterol (6-deoxoTY).</text>
</comment>
<comment type="similarity">
    <text evidence="4">Belongs to the cytochrome P450 family.</text>
</comment>
<organism>
    <name type="scientific">Oryza sativa subsp. japonica</name>
    <name type="common">Rice</name>
    <dbReference type="NCBI Taxonomy" id="39947"/>
    <lineage>
        <taxon>Eukaryota</taxon>
        <taxon>Viridiplantae</taxon>
        <taxon>Streptophyta</taxon>
        <taxon>Embryophyta</taxon>
        <taxon>Tracheophyta</taxon>
        <taxon>Spermatophyta</taxon>
        <taxon>Magnoliopsida</taxon>
        <taxon>Liliopsida</taxon>
        <taxon>Poales</taxon>
        <taxon>Poaceae</taxon>
        <taxon>BOP clade</taxon>
        <taxon>Oryzoideae</taxon>
        <taxon>Oryzeae</taxon>
        <taxon>Oryzinae</taxon>
        <taxon>Oryza</taxon>
        <taxon>Oryza sativa</taxon>
    </lineage>
</organism>
<name>C7342_ORYSJ</name>
<sequence>MEEDGGGGAGWGWATWRVAAVAAAAAVWVTMHVAARMADALWWRPRRLEAHFAAQGVRGPPYRFLLGSVREMVALMAEASSKPMSPPTSHNALPRVLAFYHYWRKIYGHRFLIWFGPTPRLTVAEPELIREIFLTRADAFDRYEAHPVVRQLEGDGLVSLHGDKWALHRRVLTDAFYPDNLNRLIPHVGKSVAALAAKWGAMAEAGGSGEVEVDVAEWFQAVTEEAITRATFGRSYDDGRVVFAMQGQLMAFASEAFRKVLVPGYRFLPTKKNRLSWRLDREIRRSLMRLIGRRSDEAEQGEKADDGSFRDLLGLMINAGAAAATRGNAGGEKNSPAAAIPVEDMLEECKTFFFAGKQTTTNLLTWATVLLAMHPDWQERARREVFDVCGAGELPSKEHLPKLKTLGMIMNETLRLYPPAVATIRRAKVDVQLSDGCMIPRDMELLVPIMAIHHDTRYWGPDASQFNPARFANGASKAAKHPLAFIPFGLGSRMCVGQNLARLEAKLTMAILLQRFEIRTSPNYVHAPTVLMLLYPQYGAPLIFRPLSSHPPDSTGP</sequence>
<reference key="1">
    <citation type="journal article" date="2011" name="Plant J.">
        <title>Rice CYP734As function as multisubstrate and multifunctional enzymes in brassinosteroid catabolism.</title>
        <authorList>
            <person name="Sakamoto T."/>
            <person name="Kawabe A."/>
            <person name="Tokida-Segawa A."/>
            <person name="Shimizu B.I."/>
            <person name="Takatsuto S."/>
            <person name="Shimada Y."/>
            <person name="Fujioka S."/>
            <person name="Mizutani M."/>
        </authorList>
    </citation>
    <scope>NUCLEOTIDE SEQUENCE [MRNA]</scope>
    <scope>FUNCTION</scope>
    <scope>TISSUE SPECIFICITY</scope>
    <scope>INDUCTION</scope>
    <source>
        <strain>cv. Nipponbare</strain>
    </source>
</reference>
<reference key="2">
    <citation type="journal article" date="2005" name="Nature">
        <title>The map-based sequence of the rice genome.</title>
        <authorList>
            <consortium name="International rice genome sequencing project (IRGSP)"/>
        </authorList>
    </citation>
    <scope>NUCLEOTIDE SEQUENCE [LARGE SCALE GENOMIC DNA]</scope>
    <source>
        <strain>cv. Nipponbare</strain>
    </source>
</reference>
<reference key="3">
    <citation type="journal article" date="2008" name="Nucleic Acids Res.">
        <title>The rice annotation project database (RAP-DB): 2008 update.</title>
        <authorList>
            <consortium name="The rice annotation project (RAP)"/>
        </authorList>
    </citation>
    <scope>GENOME REANNOTATION</scope>
    <source>
        <strain>cv. Nipponbare</strain>
    </source>
</reference>
<reference key="4">
    <citation type="journal article" date="2013" name="Rice">
        <title>Improvement of the Oryza sativa Nipponbare reference genome using next generation sequence and optical map data.</title>
        <authorList>
            <person name="Kawahara Y."/>
            <person name="de la Bastide M."/>
            <person name="Hamilton J.P."/>
            <person name="Kanamori H."/>
            <person name="McCombie W.R."/>
            <person name="Ouyang S."/>
            <person name="Schwartz D.C."/>
            <person name="Tanaka T."/>
            <person name="Wu J."/>
            <person name="Zhou S."/>
            <person name="Childs K.L."/>
            <person name="Davidson R.M."/>
            <person name="Lin H."/>
            <person name="Quesada-Ocampo L."/>
            <person name="Vaillancourt B."/>
            <person name="Sakai H."/>
            <person name="Lee S.S."/>
            <person name="Kim J."/>
            <person name="Numa H."/>
            <person name="Itoh T."/>
            <person name="Buell C.R."/>
            <person name="Matsumoto T."/>
        </authorList>
    </citation>
    <scope>GENOME REANNOTATION</scope>
    <source>
        <strain>cv. Nipponbare</strain>
    </source>
</reference>
<keyword id="KW-0341">Growth regulation</keyword>
<keyword id="KW-0349">Heme</keyword>
<keyword id="KW-0408">Iron</keyword>
<keyword id="KW-0472">Membrane</keyword>
<keyword id="KW-0479">Metal-binding</keyword>
<keyword id="KW-0503">Monooxygenase</keyword>
<keyword id="KW-0560">Oxidoreductase</keyword>
<keyword id="KW-1185">Reference proteome</keyword>
<keyword id="KW-0812">Transmembrane</keyword>
<keyword id="KW-1133">Transmembrane helix</keyword>
<protein>
    <recommendedName>
        <fullName>Cytochrome P450 734A2</fullName>
        <ecNumber>1.14.-.-</ecNumber>
    </recommendedName>
</protein>
<evidence type="ECO:0000250" key="1"/>
<evidence type="ECO:0000255" key="2"/>
<evidence type="ECO:0000269" key="3">
    <source>
    </source>
</evidence>
<evidence type="ECO:0000305" key="4"/>
<gene>
    <name type="primary">CYP734A2</name>
    <name type="ordered locus">Os02g0204700</name>
    <name type="ordered locus">LOC_Os02g11020</name>
    <name type="ORF">OSJNBb0056C19.10</name>
    <name type="ORF">P0544H11.26</name>
</gene>
<dbReference type="EC" id="1.14.-.-"/>
<dbReference type="EMBL" id="AB488666">
    <property type="protein sequence ID" value="BAH23799.1"/>
    <property type="molecule type" value="mRNA"/>
</dbReference>
<dbReference type="EMBL" id="AP005008">
    <property type="protein sequence ID" value="BAD16010.1"/>
    <property type="molecule type" value="Genomic_DNA"/>
</dbReference>
<dbReference type="EMBL" id="AP005915">
    <property type="protein sequence ID" value="BAD38430.1"/>
    <property type="molecule type" value="Genomic_DNA"/>
</dbReference>
<dbReference type="EMBL" id="AP008208">
    <property type="protein sequence ID" value="BAH91576.1"/>
    <property type="molecule type" value="Genomic_DNA"/>
</dbReference>
<dbReference type="EMBL" id="AP014958">
    <property type="protein sequence ID" value="BAS77550.1"/>
    <property type="molecule type" value="Genomic_DNA"/>
</dbReference>
<dbReference type="RefSeq" id="XP_015623670.1">
    <property type="nucleotide sequence ID" value="XM_015768184.1"/>
</dbReference>
<dbReference type="SMR" id="Q6Z6D6"/>
<dbReference type="FunCoup" id="Q6Z6D6">
    <property type="interactions" value="883"/>
</dbReference>
<dbReference type="STRING" id="39947.Q6Z6D6"/>
<dbReference type="PaxDb" id="39947-Q6Z6D6"/>
<dbReference type="EnsemblPlants" id="Os02t0204700-00">
    <property type="protein sequence ID" value="Os02t0204700-00"/>
    <property type="gene ID" value="Os02g0204700"/>
</dbReference>
<dbReference type="Gramene" id="Os02t0204700-00">
    <property type="protein sequence ID" value="Os02t0204700-00"/>
    <property type="gene ID" value="Os02g0204700"/>
</dbReference>
<dbReference type="KEGG" id="dosa:Os02g0204700"/>
<dbReference type="eggNOG" id="KOG0157">
    <property type="taxonomic scope" value="Eukaryota"/>
</dbReference>
<dbReference type="HOGENOM" id="CLU_001570_5_0_1"/>
<dbReference type="InParanoid" id="Q6Z6D6"/>
<dbReference type="OMA" id="SWRLDRE"/>
<dbReference type="OrthoDB" id="1470350at2759"/>
<dbReference type="Proteomes" id="UP000000763">
    <property type="component" value="Chromosome 2"/>
</dbReference>
<dbReference type="Proteomes" id="UP000059680">
    <property type="component" value="Chromosome 2"/>
</dbReference>
<dbReference type="GO" id="GO:0016020">
    <property type="term" value="C:membrane"/>
    <property type="evidence" value="ECO:0007669"/>
    <property type="project" value="UniProtKB-SubCell"/>
</dbReference>
<dbReference type="GO" id="GO:0020037">
    <property type="term" value="F:heme binding"/>
    <property type="evidence" value="ECO:0007669"/>
    <property type="project" value="InterPro"/>
</dbReference>
<dbReference type="GO" id="GO:0005506">
    <property type="term" value="F:iron ion binding"/>
    <property type="evidence" value="ECO:0007669"/>
    <property type="project" value="InterPro"/>
</dbReference>
<dbReference type="GO" id="GO:0004497">
    <property type="term" value="F:monooxygenase activity"/>
    <property type="evidence" value="ECO:0000314"/>
    <property type="project" value="UniProtKB"/>
</dbReference>
<dbReference type="GO" id="GO:0016705">
    <property type="term" value="F:oxidoreductase activity, acting on paired donors, with incorporation or reduction of molecular oxygen"/>
    <property type="evidence" value="ECO:0007669"/>
    <property type="project" value="InterPro"/>
</dbReference>
<dbReference type="GO" id="GO:0010268">
    <property type="term" value="P:brassinosteroid homeostasis"/>
    <property type="evidence" value="ECO:0000314"/>
    <property type="project" value="UniProtKB"/>
</dbReference>
<dbReference type="GO" id="GO:0016131">
    <property type="term" value="P:brassinosteroid metabolic process"/>
    <property type="evidence" value="ECO:0000314"/>
    <property type="project" value="UniProtKB"/>
</dbReference>
<dbReference type="CDD" id="cd20639">
    <property type="entry name" value="CYP734"/>
    <property type="match status" value="1"/>
</dbReference>
<dbReference type="FunFam" id="1.10.630.10:FF:000029">
    <property type="entry name" value="Cytochrome P450 734A1"/>
    <property type="match status" value="1"/>
</dbReference>
<dbReference type="Gene3D" id="1.10.630.10">
    <property type="entry name" value="Cytochrome P450"/>
    <property type="match status" value="1"/>
</dbReference>
<dbReference type="InterPro" id="IPR001128">
    <property type="entry name" value="Cyt_P450"/>
</dbReference>
<dbReference type="InterPro" id="IPR017972">
    <property type="entry name" value="Cyt_P450_CS"/>
</dbReference>
<dbReference type="InterPro" id="IPR002401">
    <property type="entry name" value="Cyt_P450_E_grp-I"/>
</dbReference>
<dbReference type="InterPro" id="IPR036396">
    <property type="entry name" value="Cyt_P450_sf"/>
</dbReference>
<dbReference type="InterPro" id="IPR050665">
    <property type="entry name" value="Cytochrome_P450_Monooxygen"/>
</dbReference>
<dbReference type="PANTHER" id="PTHR24282:SF31">
    <property type="entry name" value="CYTOCHROME P450 734A2"/>
    <property type="match status" value="1"/>
</dbReference>
<dbReference type="PANTHER" id="PTHR24282">
    <property type="entry name" value="CYTOCHROME P450 FAMILY MEMBER"/>
    <property type="match status" value="1"/>
</dbReference>
<dbReference type="Pfam" id="PF00067">
    <property type="entry name" value="p450"/>
    <property type="match status" value="1"/>
</dbReference>
<dbReference type="PRINTS" id="PR00463">
    <property type="entry name" value="EP450I"/>
</dbReference>
<dbReference type="PRINTS" id="PR00385">
    <property type="entry name" value="P450"/>
</dbReference>
<dbReference type="SUPFAM" id="SSF48264">
    <property type="entry name" value="Cytochrome P450"/>
    <property type="match status" value="1"/>
</dbReference>
<dbReference type="PROSITE" id="PS00086">
    <property type="entry name" value="CYTOCHROME_P450"/>
    <property type="match status" value="1"/>
</dbReference>
<accession>Q6Z6D6</accession>
<accession>A0A0P0VG55</accession>
<feature type="chain" id="PRO_0000411201" description="Cytochrome P450 734A2">
    <location>
        <begin position="1"/>
        <end position="557"/>
    </location>
</feature>
<feature type="transmembrane region" description="Helical" evidence="2">
    <location>
        <begin position="13"/>
        <end position="35"/>
    </location>
</feature>
<feature type="binding site" description="axial binding residue" evidence="1">
    <location>
        <position position="495"/>
    </location>
    <ligand>
        <name>heme</name>
        <dbReference type="ChEBI" id="CHEBI:30413"/>
    </ligand>
    <ligandPart>
        <name>Fe</name>
        <dbReference type="ChEBI" id="CHEBI:18248"/>
    </ligandPart>
</feature>